<organism>
    <name type="scientific">Danio rerio</name>
    <name type="common">Zebrafish</name>
    <name type="synonym">Brachydanio rerio</name>
    <dbReference type="NCBI Taxonomy" id="7955"/>
    <lineage>
        <taxon>Eukaryota</taxon>
        <taxon>Metazoa</taxon>
        <taxon>Chordata</taxon>
        <taxon>Craniata</taxon>
        <taxon>Vertebrata</taxon>
        <taxon>Euteleostomi</taxon>
        <taxon>Actinopterygii</taxon>
        <taxon>Neopterygii</taxon>
        <taxon>Teleostei</taxon>
        <taxon>Ostariophysi</taxon>
        <taxon>Cypriniformes</taxon>
        <taxon>Danionidae</taxon>
        <taxon>Danioninae</taxon>
        <taxon>Danio</taxon>
    </lineage>
</organism>
<reference key="1">
    <citation type="submission" date="2003-08" db="EMBL/GenBank/DDBJ databases">
        <authorList>
            <consortium name="NIH - Zebrafish Gene Collection (ZGC) project"/>
        </authorList>
    </citation>
    <scope>NUCLEOTIDE SEQUENCE [LARGE SCALE MRNA]</scope>
    <source>
        <strain>AB</strain>
        <tissue>Kidney</tissue>
    </source>
</reference>
<proteinExistence type="evidence at transcript level"/>
<protein>
    <recommendedName>
        <fullName>Phosphoinositide-3-kinase-interacting protein 1</fullName>
    </recommendedName>
    <alternativeName>
        <fullName>Kringle domain-containing protein HGFL</fullName>
    </alternativeName>
</protein>
<accession>Q7SXB3</accession>
<sequence>MFGRLYFMLLLSVGLVDCLSVVKDCITNNGEDYRGTQQKTSSGSTCLSWRSLNLKFKDSQTGVGDHNFCRNPDGSNKPWCYVSGSSGETKKEACDIRICQDQNATEAPAPEESVPTQGLTQRMVETFEPANSFPSQVEGAAVQPVKGVRQQVRSGPKKKKDLGTLGYVLAVFMMAIIILLGGGITMGYFYKRGRDLKKQHEQRVYEREMHRITLPLSAFANPTCELVDENTIVITAEPNNQTPTQEPVEGADPLMGSAGTPGA</sequence>
<gene>
    <name type="primary">pik3ip1</name>
    <name type="synonym">hgfl</name>
    <name type="ORF">zgc:66482</name>
</gene>
<feature type="signal peptide" evidence="3">
    <location>
        <begin position="1"/>
        <end position="18"/>
    </location>
</feature>
<feature type="chain" id="PRO_0000280351" description="Phosphoinositide-3-kinase-interacting protein 1">
    <location>
        <begin position="19"/>
        <end position="263"/>
    </location>
</feature>
<feature type="topological domain" description="Extracellular" evidence="3">
    <location>
        <begin position="19"/>
        <end position="163"/>
    </location>
</feature>
<feature type="transmembrane region" description="Helical" evidence="3">
    <location>
        <begin position="164"/>
        <end position="184"/>
    </location>
</feature>
<feature type="topological domain" description="Cytoplasmic" evidence="3">
    <location>
        <begin position="185"/>
        <end position="263"/>
    </location>
</feature>
<feature type="domain" description="Kringle" evidence="4">
    <location>
        <begin position="24"/>
        <end position="99"/>
    </location>
</feature>
<feature type="region of interest" description="Disordered" evidence="5">
    <location>
        <begin position="239"/>
        <end position="263"/>
    </location>
</feature>
<feature type="glycosylation site" description="N-linked (GlcNAc...) asparagine" evidence="3">
    <location>
        <position position="103"/>
    </location>
</feature>
<feature type="disulfide bond" evidence="4">
    <location>
        <begin position="25"/>
        <end position="99"/>
    </location>
</feature>
<feature type="disulfide bond" evidence="4">
    <location>
        <begin position="46"/>
        <end position="80"/>
    </location>
</feature>
<feature type="disulfide bond" evidence="4">
    <location>
        <begin position="69"/>
        <end position="94"/>
    </location>
</feature>
<name>P3IP1_DANRE</name>
<dbReference type="EMBL" id="BC055675">
    <property type="protein sequence ID" value="AAH55675.1"/>
    <property type="molecule type" value="mRNA"/>
</dbReference>
<dbReference type="EMBL" id="BC067191">
    <property type="protein sequence ID" value="AAH67191.1"/>
    <property type="molecule type" value="mRNA"/>
</dbReference>
<dbReference type="RefSeq" id="NP_938188.1">
    <property type="nucleotide sequence ID" value="NM_198374.1"/>
</dbReference>
<dbReference type="SMR" id="Q7SXB3"/>
<dbReference type="FunCoup" id="Q7SXB3">
    <property type="interactions" value="1254"/>
</dbReference>
<dbReference type="STRING" id="7955.ENSDARP00000115818"/>
<dbReference type="GlyCosmos" id="Q7SXB3">
    <property type="glycosylation" value="1 site, No reported glycans"/>
</dbReference>
<dbReference type="PaxDb" id="7955-ENSDARP00000115818"/>
<dbReference type="GeneID" id="386643"/>
<dbReference type="KEGG" id="dre:386643"/>
<dbReference type="AGR" id="ZFIN:ZDB-GENE-031030-14"/>
<dbReference type="CTD" id="113791"/>
<dbReference type="ZFIN" id="ZDB-GENE-031030-14">
    <property type="gene designation" value="pik3ip1"/>
</dbReference>
<dbReference type="eggNOG" id="ENOG502QTWD">
    <property type="taxonomic scope" value="Eukaryota"/>
</dbReference>
<dbReference type="InParanoid" id="Q7SXB3"/>
<dbReference type="OrthoDB" id="9893972at2759"/>
<dbReference type="PhylomeDB" id="Q7SXB3"/>
<dbReference type="PRO" id="PR:Q7SXB3"/>
<dbReference type="Proteomes" id="UP000000437">
    <property type="component" value="Chromosome 5"/>
</dbReference>
<dbReference type="GO" id="GO:0005615">
    <property type="term" value="C:extracellular space"/>
    <property type="evidence" value="ECO:0000318"/>
    <property type="project" value="GO_Central"/>
</dbReference>
<dbReference type="GO" id="GO:0005886">
    <property type="term" value="C:plasma membrane"/>
    <property type="evidence" value="ECO:0007669"/>
    <property type="project" value="UniProtKB-SubCell"/>
</dbReference>
<dbReference type="GO" id="GO:0004175">
    <property type="term" value="F:endopeptidase activity"/>
    <property type="evidence" value="ECO:0000318"/>
    <property type="project" value="GO_Central"/>
</dbReference>
<dbReference type="GO" id="GO:0005102">
    <property type="term" value="F:signaling receptor binding"/>
    <property type="evidence" value="ECO:0000318"/>
    <property type="project" value="GO_Central"/>
</dbReference>
<dbReference type="GO" id="GO:0051898">
    <property type="term" value="P:negative regulation of phosphatidylinositol 3-kinase/protein kinase B signal transduction"/>
    <property type="evidence" value="ECO:0000318"/>
    <property type="project" value="GO_Central"/>
</dbReference>
<dbReference type="CDD" id="cd00108">
    <property type="entry name" value="KR"/>
    <property type="match status" value="1"/>
</dbReference>
<dbReference type="FunFam" id="2.40.20.10:FF:000001">
    <property type="entry name" value="Urokinase-type plasminogen activator"/>
    <property type="match status" value="1"/>
</dbReference>
<dbReference type="Gene3D" id="2.40.20.10">
    <property type="entry name" value="Plasminogen Kringle 4"/>
    <property type="match status" value="1"/>
</dbReference>
<dbReference type="InterPro" id="IPR000001">
    <property type="entry name" value="Kringle"/>
</dbReference>
<dbReference type="InterPro" id="IPR013806">
    <property type="entry name" value="Kringle-like"/>
</dbReference>
<dbReference type="InterPro" id="IPR018056">
    <property type="entry name" value="Kringle_CS"/>
</dbReference>
<dbReference type="InterPro" id="IPR038178">
    <property type="entry name" value="Kringle_sf"/>
</dbReference>
<dbReference type="InterPro" id="IPR050759">
    <property type="entry name" value="Serine_protease_kringle"/>
</dbReference>
<dbReference type="PANTHER" id="PTHR24261:SF16">
    <property type="entry name" value="PHOSPHOINOSITIDE-3-KINASE-INTERACTING PROTEIN 1"/>
    <property type="match status" value="1"/>
</dbReference>
<dbReference type="PANTHER" id="PTHR24261">
    <property type="entry name" value="PLASMINOGEN-RELATED"/>
    <property type="match status" value="1"/>
</dbReference>
<dbReference type="Pfam" id="PF00051">
    <property type="entry name" value="Kringle"/>
    <property type="match status" value="1"/>
</dbReference>
<dbReference type="PRINTS" id="PR00018">
    <property type="entry name" value="KRINGLE"/>
</dbReference>
<dbReference type="SMART" id="SM00130">
    <property type="entry name" value="KR"/>
    <property type="match status" value="1"/>
</dbReference>
<dbReference type="SUPFAM" id="SSF57440">
    <property type="entry name" value="Kringle-like"/>
    <property type="match status" value="1"/>
</dbReference>
<dbReference type="PROSITE" id="PS00021">
    <property type="entry name" value="KRINGLE_1"/>
    <property type="match status" value="1"/>
</dbReference>
<dbReference type="PROSITE" id="PS50070">
    <property type="entry name" value="KRINGLE_2"/>
    <property type="match status" value="1"/>
</dbReference>
<keyword id="KW-1003">Cell membrane</keyword>
<keyword id="KW-1015">Disulfide bond</keyword>
<keyword id="KW-0325">Glycoprotein</keyword>
<keyword id="KW-0420">Kringle</keyword>
<keyword id="KW-0472">Membrane</keyword>
<keyword id="KW-1185">Reference proteome</keyword>
<keyword id="KW-0732">Signal</keyword>
<keyword id="KW-0812">Transmembrane</keyword>
<keyword id="KW-1133">Transmembrane helix</keyword>
<comment type="function">
    <text evidence="1">Negative regulator of hepatic phosphatidylinositol 3-kinase (PI3K) activity.</text>
</comment>
<comment type="subcellular location">
    <subcellularLocation>
        <location evidence="2">Cell membrane</location>
        <topology evidence="3">Single-pass type I membrane protein</topology>
    </subcellularLocation>
</comment>
<evidence type="ECO:0000250" key="1">
    <source>
        <dbReference type="UniProtKB" id="Q7TMJ8"/>
    </source>
</evidence>
<evidence type="ECO:0000250" key="2">
    <source>
        <dbReference type="UniProtKB" id="Q96FE7"/>
    </source>
</evidence>
<evidence type="ECO:0000255" key="3"/>
<evidence type="ECO:0000255" key="4">
    <source>
        <dbReference type="PROSITE-ProRule" id="PRU00121"/>
    </source>
</evidence>
<evidence type="ECO:0000256" key="5">
    <source>
        <dbReference type="SAM" id="MobiDB-lite"/>
    </source>
</evidence>